<sequence>MLQPQFRPLLAGTASFAQTVLGRTVARCYATKAATQSASSTSTSNTSKDAKAKIVTPYVRDAGMMRTYKPHTPGIRHLKRPINDHLWKGRPYLPLTFPKKGQSKGGRNHSGRVTVRHRGGGHKRRIRMVDFERWIPGPHTVLRIEYDPGRSAHIALVKEEATGRKSYIVAADGMRAGDVVQSYRSGLPQDLLDSMGGVVDPGILAARTCWRGNCLPVSMIPVGTQIYCVGSRPDGKAVFCRSAGTYATIISKEEETREDGTKVMTGKFVNVRLQSGEIRRVSKDACATVGIASNIMHHYRQLGKAGRSRWLNIRPTVRGLAMNANDHPHGGGRGKSKGNRHPVSPWGTPAKGGYKTRRKSNVNKWVVTPRVRNMGVRRNKKTT</sequence>
<keyword id="KW-0002">3D-structure</keyword>
<keyword id="KW-0496">Mitochondrion</keyword>
<keyword id="KW-1185">Reference proteome</keyword>
<keyword id="KW-0687">Ribonucleoprotein</keyword>
<keyword id="KW-0689">Ribosomal protein</keyword>
<gene>
    <name type="primary">rml2</name>
    <name type="ORF">NCU02757</name>
</gene>
<reference key="1">
    <citation type="journal article" date="2003" name="Nature">
        <title>The genome sequence of the filamentous fungus Neurospora crassa.</title>
        <authorList>
            <person name="Galagan J.E."/>
            <person name="Calvo S.E."/>
            <person name="Borkovich K.A."/>
            <person name="Selker E.U."/>
            <person name="Read N.D."/>
            <person name="Jaffe D.B."/>
            <person name="FitzHugh W."/>
            <person name="Ma L.-J."/>
            <person name="Smirnov S."/>
            <person name="Purcell S."/>
            <person name="Rehman B."/>
            <person name="Elkins T."/>
            <person name="Engels R."/>
            <person name="Wang S."/>
            <person name="Nielsen C.B."/>
            <person name="Butler J."/>
            <person name="Endrizzi M."/>
            <person name="Qui D."/>
            <person name="Ianakiev P."/>
            <person name="Bell-Pedersen D."/>
            <person name="Nelson M.A."/>
            <person name="Werner-Washburne M."/>
            <person name="Selitrennikoff C.P."/>
            <person name="Kinsey J.A."/>
            <person name="Braun E.L."/>
            <person name="Zelter A."/>
            <person name="Schulte U."/>
            <person name="Kothe G.O."/>
            <person name="Jedd G."/>
            <person name="Mewes H.-W."/>
            <person name="Staben C."/>
            <person name="Marcotte E."/>
            <person name="Greenberg D."/>
            <person name="Roy A."/>
            <person name="Foley K."/>
            <person name="Naylor J."/>
            <person name="Stange-Thomann N."/>
            <person name="Barrett R."/>
            <person name="Gnerre S."/>
            <person name="Kamal M."/>
            <person name="Kamvysselis M."/>
            <person name="Mauceli E.W."/>
            <person name="Bielke C."/>
            <person name="Rudd S."/>
            <person name="Frishman D."/>
            <person name="Krystofova S."/>
            <person name="Rasmussen C."/>
            <person name="Metzenberg R.L."/>
            <person name="Perkins D.D."/>
            <person name="Kroken S."/>
            <person name="Cogoni C."/>
            <person name="Macino G."/>
            <person name="Catcheside D.E.A."/>
            <person name="Li W."/>
            <person name="Pratt R.J."/>
            <person name="Osmani S.A."/>
            <person name="DeSouza C.P.C."/>
            <person name="Glass N.L."/>
            <person name="Orbach M.J."/>
            <person name="Berglund J.A."/>
            <person name="Voelker R."/>
            <person name="Yarden O."/>
            <person name="Plamann M."/>
            <person name="Seiler S."/>
            <person name="Dunlap J.C."/>
            <person name="Radford A."/>
            <person name="Aramayo R."/>
            <person name="Natvig D.O."/>
            <person name="Alex L.A."/>
            <person name="Mannhaupt G."/>
            <person name="Ebbole D.J."/>
            <person name="Freitag M."/>
            <person name="Paulsen I."/>
            <person name="Sachs M.S."/>
            <person name="Lander E.S."/>
            <person name="Nusbaum C."/>
            <person name="Birren B.W."/>
        </authorList>
    </citation>
    <scope>NUCLEOTIDE SEQUENCE [LARGE SCALE GENOMIC DNA]</scope>
    <source>
        <strain>ATCC 24698 / 74-OR23-1A / CBS 708.71 / DSM 1257 / FGSC 987</strain>
    </source>
</reference>
<reference evidence="6 7" key="2">
    <citation type="journal article" date="2020" name="Nat. Commun.">
        <title>Analysis of translating mitoribosome reveals functional characteristics of translation in mitochondria of fungi.</title>
        <authorList>
            <person name="Itoh Y."/>
            <person name="Naschberger A."/>
            <person name="Mortezaei N."/>
            <person name="Herrmann J.M."/>
            <person name="Amunts A."/>
        </authorList>
    </citation>
    <scope>STRUCTURE BY ELECTRON MICROSCOPY (2.74 ANGSTROMS)</scope>
</reference>
<comment type="function">
    <text evidence="5">Component of the mitochondrial ribosome (mitoribosome), a dedicated translation machinery responsible for the synthesis of mitochondrial genome-encoded proteins, including at least some of the essential transmembrane subunits of the mitochondrial respiratory chain. The mitoribosomes are attached to the mitochondrial inner membrane and translation products are cotranslationally integrated into the membrane.</text>
</comment>
<comment type="subunit">
    <text evidence="2">Component of the mitochondrial large ribosomal subunit (mt-LSU). Mature N.crassa 74S mitochondrial ribosomes consist of a small (37S) and a large (54S) subunit. The 37S small subunit contains a 16S ribosomal RNA (16S mt-rRNA) and 32 different proteins. The 54S large subunit contains a 23S rRNA (23S mt-rRNA) and 42 different proteins.</text>
</comment>
<comment type="subcellular location">
    <subcellularLocation>
        <location evidence="2">Mitochondrion</location>
    </subcellularLocation>
</comment>
<comment type="similarity">
    <text evidence="4">Belongs to the universal ribosomal protein uL2 family.</text>
</comment>
<evidence type="ECO:0000256" key="1">
    <source>
        <dbReference type="SAM" id="MobiDB-lite"/>
    </source>
</evidence>
<evidence type="ECO:0000269" key="2">
    <source>
    </source>
</evidence>
<evidence type="ECO:0000303" key="3">
    <source>
    </source>
</evidence>
<evidence type="ECO:0000305" key="4"/>
<evidence type="ECO:0000305" key="5">
    <source>
    </source>
</evidence>
<evidence type="ECO:0007744" key="6">
    <source>
        <dbReference type="PDB" id="6YWS"/>
    </source>
</evidence>
<evidence type="ECO:0007744" key="7">
    <source>
        <dbReference type="PDB" id="6YWV"/>
    </source>
</evidence>
<feature type="chain" id="PRO_0000458603" description="Large ribosomal subunit protein uL2m">
    <location>
        <begin position="1"/>
        <end position="383"/>
    </location>
</feature>
<feature type="region of interest" description="Disordered" evidence="1">
    <location>
        <begin position="97"/>
        <end position="122"/>
    </location>
</feature>
<feature type="region of interest" description="Disordered" evidence="1">
    <location>
        <begin position="322"/>
        <end position="357"/>
    </location>
</feature>
<feature type="compositionally biased region" description="Basic residues" evidence="1">
    <location>
        <begin position="106"/>
        <end position="122"/>
    </location>
</feature>
<feature type="compositionally biased region" description="Basic residues" evidence="1">
    <location>
        <begin position="330"/>
        <end position="340"/>
    </location>
</feature>
<proteinExistence type="evidence at protein level"/>
<dbReference type="EMBL" id="CM002236">
    <property type="protein sequence ID" value="EAA34614.2"/>
    <property type="molecule type" value="Genomic_DNA"/>
</dbReference>
<dbReference type="RefSeq" id="XP_963850.2">
    <property type="nucleotide sequence ID" value="XM_958757.3"/>
</dbReference>
<dbReference type="PDB" id="6YWS">
    <property type="method" value="EM"/>
    <property type="resolution" value="2.74 A"/>
    <property type="chains" value="B=1-383"/>
</dbReference>
<dbReference type="PDB" id="6YWV">
    <property type="method" value="EM"/>
    <property type="resolution" value="3.03 A"/>
    <property type="chains" value="B=1-383"/>
</dbReference>
<dbReference type="PDB" id="6YWX">
    <property type="method" value="EM"/>
    <property type="resolution" value="3.10 A"/>
    <property type="chains" value="B=1-383"/>
</dbReference>
<dbReference type="PDBsum" id="6YWS"/>
<dbReference type="PDBsum" id="6YWV"/>
<dbReference type="PDBsum" id="6YWX"/>
<dbReference type="EMDB" id="EMD-10973"/>
<dbReference type="EMDB" id="EMD-10977"/>
<dbReference type="EMDB" id="EMD-10978"/>
<dbReference type="SMR" id="Q7SCX7"/>
<dbReference type="FunCoup" id="Q7SCX7">
    <property type="interactions" value="416"/>
</dbReference>
<dbReference type="STRING" id="367110.Q7SCX7"/>
<dbReference type="PaxDb" id="5141-EFNCRP00000002183"/>
<dbReference type="EnsemblFungi" id="EAA34614">
    <property type="protein sequence ID" value="EAA34614"/>
    <property type="gene ID" value="NCU02757"/>
</dbReference>
<dbReference type="GeneID" id="3879999"/>
<dbReference type="KEGG" id="ncr:NCU02757"/>
<dbReference type="VEuPathDB" id="FungiDB:NCU02757"/>
<dbReference type="HOGENOM" id="CLU_036235_3_0_1"/>
<dbReference type="InParanoid" id="Q7SCX7"/>
<dbReference type="OrthoDB" id="268576at2759"/>
<dbReference type="Proteomes" id="UP000001805">
    <property type="component" value="Chromosome 1, Linkage Group I"/>
</dbReference>
<dbReference type="GO" id="GO:0005762">
    <property type="term" value="C:mitochondrial large ribosomal subunit"/>
    <property type="evidence" value="ECO:0000318"/>
    <property type="project" value="GO_Central"/>
</dbReference>
<dbReference type="GO" id="GO:0003723">
    <property type="term" value="F:RNA binding"/>
    <property type="evidence" value="ECO:0000318"/>
    <property type="project" value="GO_Central"/>
</dbReference>
<dbReference type="GO" id="GO:0003735">
    <property type="term" value="F:structural constituent of ribosome"/>
    <property type="evidence" value="ECO:0000318"/>
    <property type="project" value="GO_Central"/>
</dbReference>
<dbReference type="GO" id="GO:0016740">
    <property type="term" value="F:transferase activity"/>
    <property type="evidence" value="ECO:0007669"/>
    <property type="project" value="InterPro"/>
</dbReference>
<dbReference type="GO" id="GO:0032543">
    <property type="term" value="P:mitochondrial translation"/>
    <property type="evidence" value="ECO:0000318"/>
    <property type="project" value="GO_Central"/>
</dbReference>
<dbReference type="FunFam" id="2.30.30.30:FF:000034">
    <property type="entry name" value="50S ribosomal protein L2"/>
    <property type="match status" value="1"/>
</dbReference>
<dbReference type="FunFam" id="2.40.50.140:FF:000128">
    <property type="entry name" value="50S ribosomal protein L2"/>
    <property type="match status" value="1"/>
</dbReference>
<dbReference type="FunFam" id="4.10.950.10:FF:000001">
    <property type="entry name" value="50S ribosomal protein L2"/>
    <property type="match status" value="1"/>
</dbReference>
<dbReference type="Gene3D" id="2.30.30.30">
    <property type="match status" value="1"/>
</dbReference>
<dbReference type="Gene3D" id="2.40.50.140">
    <property type="entry name" value="Nucleic acid-binding proteins"/>
    <property type="match status" value="1"/>
</dbReference>
<dbReference type="Gene3D" id="4.10.950.10">
    <property type="entry name" value="Ribosomal protein L2, domain 3"/>
    <property type="match status" value="1"/>
</dbReference>
<dbReference type="InterPro" id="IPR012340">
    <property type="entry name" value="NA-bd_OB-fold"/>
</dbReference>
<dbReference type="InterPro" id="IPR014722">
    <property type="entry name" value="Rib_uL2_dom2"/>
</dbReference>
<dbReference type="InterPro" id="IPR002171">
    <property type="entry name" value="Ribosomal_uL2"/>
</dbReference>
<dbReference type="InterPro" id="IPR005880">
    <property type="entry name" value="Ribosomal_uL2_bac/org-type"/>
</dbReference>
<dbReference type="InterPro" id="IPR022669">
    <property type="entry name" value="Ribosomal_uL2_C"/>
</dbReference>
<dbReference type="InterPro" id="IPR014726">
    <property type="entry name" value="Ribosomal_uL2_dom3"/>
</dbReference>
<dbReference type="InterPro" id="IPR022666">
    <property type="entry name" value="Ribosomal_uL2_RNA-bd_dom"/>
</dbReference>
<dbReference type="InterPro" id="IPR008991">
    <property type="entry name" value="Translation_prot_SH3-like_sf"/>
</dbReference>
<dbReference type="NCBIfam" id="TIGR01171">
    <property type="entry name" value="rplB_bact"/>
    <property type="match status" value="1"/>
</dbReference>
<dbReference type="PANTHER" id="PTHR13691:SF5">
    <property type="entry name" value="LARGE RIBOSOMAL SUBUNIT PROTEIN UL2M"/>
    <property type="match status" value="1"/>
</dbReference>
<dbReference type="PANTHER" id="PTHR13691">
    <property type="entry name" value="RIBOSOMAL PROTEIN L2"/>
    <property type="match status" value="1"/>
</dbReference>
<dbReference type="Pfam" id="PF00181">
    <property type="entry name" value="Ribosomal_L2"/>
    <property type="match status" value="1"/>
</dbReference>
<dbReference type="Pfam" id="PF03947">
    <property type="entry name" value="Ribosomal_L2_C"/>
    <property type="match status" value="1"/>
</dbReference>
<dbReference type="SMART" id="SM01383">
    <property type="entry name" value="Ribosomal_L2"/>
    <property type="match status" value="1"/>
</dbReference>
<dbReference type="SMART" id="SM01382">
    <property type="entry name" value="Ribosomal_L2_C"/>
    <property type="match status" value="1"/>
</dbReference>
<dbReference type="SUPFAM" id="SSF50249">
    <property type="entry name" value="Nucleic acid-binding proteins"/>
    <property type="match status" value="1"/>
</dbReference>
<dbReference type="SUPFAM" id="SSF50104">
    <property type="entry name" value="Translation proteins SH3-like domain"/>
    <property type="match status" value="1"/>
</dbReference>
<organism>
    <name type="scientific">Neurospora crassa (strain ATCC 24698 / 74-OR23-1A / CBS 708.71 / DSM 1257 / FGSC 987)</name>
    <dbReference type="NCBI Taxonomy" id="367110"/>
    <lineage>
        <taxon>Eukaryota</taxon>
        <taxon>Fungi</taxon>
        <taxon>Dikarya</taxon>
        <taxon>Ascomycota</taxon>
        <taxon>Pezizomycotina</taxon>
        <taxon>Sordariomycetes</taxon>
        <taxon>Sordariomycetidae</taxon>
        <taxon>Sordariales</taxon>
        <taxon>Sordariaceae</taxon>
        <taxon>Neurospora</taxon>
    </lineage>
</organism>
<accession>Q7SCX7</accession>
<protein>
    <recommendedName>
        <fullName evidence="3">Large ribosomal subunit protein uL2m</fullName>
    </recommendedName>
</protein>
<name>RML2_NEUCR</name>